<comment type="function">
    <text evidence="3">May play a role in sperm formation.</text>
</comment>
<comment type="interaction">
    <interactant intactId="EBI-724829">
        <id>Q9H0A6</id>
    </interactant>
    <interactant intactId="EBI-719790">
        <id>Q9NXK8</id>
        <label>FBXL12</label>
    </interactant>
    <organismsDiffer>false</organismsDiffer>
    <experiments>2</experiments>
</comment>
<comment type="interaction">
    <interactant intactId="EBI-724829">
        <id>Q9H0A6</id>
    </interactant>
    <interactant intactId="EBI-2860740">
        <id>Q96QH2</id>
        <label>PRAM1</label>
    </interactant>
    <organismsDiffer>false</organismsDiffer>
    <experiments>2</experiments>
</comment>
<comment type="interaction">
    <interactant intactId="EBI-724829">
        <id>Q9H0A6</id>
    </interactant>
    <interactant intactId="EBI-745021">
        <id>Q96FJ0</id>
        <label>STAMBPL1</label>
    </interactant>
    <organismsDiffer>false</organismsDiffer>
    <experiments>2</experiments>
</comment>
<comment type="interaction">
    <interactant intactId="EBI-25868153">
        <id>Q9H0A6-4</id>
    </interactant>
    <interactant intactId="EBI-473850">
        <id>P61086</id>
        <label>UBE2K</label>
    </interactant>
    <organismsDiffer>false</organismsDiffer>
    <experiments>3</experiments>
</comment>
<comment type="subcellular location">
    <subcellularLocation>
        <location evidence="3">Cytoplasm</location>
    </subcellularLocation>
</comment>
<comment type="alternative products">
    <event type="alternative splicing"/>
    <isoform>
        <id>Q9H0A6-1</id>
        <name>1</name>
        <sequence type="displayed"/>
    </isoform>
    <isoform>
        <id>Q9H0A6-2</id>
        <name>2</name>
        <sequence type="described" ref="VSP_019740"/>
    </isoform>
    <isoform>
        <id>Q9H0A6-4</id>
        <name>3</name>
        <sequence type="described" ref="VSP_019743 VSP_019744"/>
    </isoform>
    <isoform>
        <id>Q9H0A6-5</id>
        <name>4</name>
        <sequence type="described" ref="VSP_019741"/>
    </isoform>
    <isoform>
        <id>Q9H0A6-6</id>
        <name>5</name>
        <sequence type="described" ref="VSP_019738 VSP_019739"/>
    </isoform>
    <text>Other isoforms seem to exist.</text>
</comment>
<comment type="tissue specificity">
    <text evidence="3">Highly expressed in testis, less abundant in ovary.</text>
</comment>
<comment type="miscellaneous">
    <molecule>Isoform 5</molecule>
    <text evidence="8">May be produced at very low levels due to a premature stop codon in the mRNA, leading to nonsense-mediated mRNA decay.</text>
</comment>
<feature type="chain" id="PRO_0000245532" description="RING finger protein 32">
    <location>
        <begin position="1"/>
        <end position="362"/>
    </location>
</feature>
<feature type="domain" description="IQ" evidence="1">
    <location>
        <begin position="186"/>
        <end position="215"/>
    </location>
</feature>
<feature type="zinc finger region" description="RING-type 1; atypical" evidence="2">
    <location>
        <begin position="127"/>
        <end position="169"/>
    </location>
</feature>
<feature type="zinc finger region" description="RING-type 2; atypical" evidence="2">
    <location>
        <begin position="293"/>
        <end position="352"/>
    </location>
</feature>
<feature type="splice variant" id="VSP_019738" description="In isoform 5." evidence="4">
    <original>AQKL</original>
    <variation>GYHS</variation>
    <location>
        <begin position="92"/>
        <end position="95"/>
    </location>
</feature>
<feature type="splice variant" id="VSP_019739" description="In isoform 5." evidence="4">
    <location>
        <begin position="96"/>
        <end position="362"/>
    </location>
</feature>
<feature type="splice variant" id="VSP_019740" description="In isoform 2." evidence="8">
    <original>LLSCSHVFHKACLQAFEKFTNKKTCPLCR</original>
    <variation>FSIRG</variation>
    <location>
        <begin position="141"/>
        <end position="169"/>
    </location>
</feature>
<feature type="splice variant" id="VSP_019741" description="In isoform 4." evidence="6">
    <location>
        <begin position="170"/>
        <end position="352"/>
    </location>
</feature>
<feature type="splice variant" id="VSP_019743" description="In isoform 3." evidence="5 7">
    <original>FTEISHR</original>
    <variation>TQDWKPA</variation>
    <location>
        <begin position="229"/>
        <end position="235"/>
    </location>
</feature>
<feature type="splice variant" id="VSP_019744" description="In isoform 3." evidence="5 7">
    <location>
        <begin position="236"/>
        <end position="362"/>
    </location>
</feature>
<feature type="sequence variant" id="VAR_026982" description="In dbSNP:rs2302148.">
    <original>R</original>
    <variation>Q</variation>
    <location>
        <position position="288"/>
    </location>
</feature>
<feature type="sequence variant" id="VAR_026983" description="In dbSNP:rs2302147.">
    <original>H</original>
    <variation>Q</variation>
    <location>
        <position position="291"/>
    </location>
</feature>
<feature type="sequence variant" id="VAR_026984" description="In dbSNP:rs2302146.">
    <original>R</original>
    <variation>C</variation>
    <location>
        <position position="307"/>
    </location>
</feature>
<feature type="sequence conflict" description="In Ref. 6; CAG38544." evidence="8" ref="6">
    <original>L</original>
    <variation>P</variation>
    <location>
        <position position="97"/>
    </location>
</feature>
<protein>
    <recommendedName>
        <fullName>RING finger protein 32</fullName>
    </recommendedName>
</protein>
<evidence type="ECO:0000255" key="1">
    <source>
        <dbReference type="PROSITE-ProRule" id="PRU00116"/>
    </source>
</evidence>
<evidence type="ECO:0000255" key="2">
    <source>
        <dbReference type="PROSITE-ProRule" id="PRU00175"/>
    </source>
</evidence>
<evidence type="ECO:0000269" key="3">
    <source>
    </source>
</evidence>
<evidence type="ECO:0000303" key="4">
    <source>
    </source>
</evidence>
<evidence type="ECO:0000303" key="5">
    <source>
    </source>
</evidence>
<evidence type="ECO:0000303" key="6">
    <source ref="4"/>
</evidence>
<evidence type="ECO:0000303" key="7">
    <source ref="5"/>
</evidence>
<evidence type="ECO:0000305" key="8"/>
<dbReference type="EMBL" id="AF441222">
    <property type="protein sequence ID" value="AAM18664.1"/>
    <property type="molecule type" value="mRNA"/>
</dbReference>
<dbReference type="EMBL" id="AF441224">
    <property type="protein sequence ID" value="AAM18666.1"/>
    <property type="molecule type" value="mRNA"/>
</dbReference>
<dbReference type="EMBL" id="AF325690">
    <property type="protein sequence ID" value="AAG50281.1"/>
    <property type="molecule type" value="mRNA"/>
</dbReference>
<dbReference type="EMBL" id="AL136874">
    <property type="protein sequence ID" value="CAB66808.1"/>
    <property type="molecule type" value="mRNA"/>
</dbReference>
<dbReference type="EMBL" id="AY251165">
    <property type="protein sequence ID" value="AAP20062.1"/>
    <property type="molecule type" value="mRNA"/>
</dbReference>
<dbReference type="EMBL" id="BT007037">
    <property type="protein sequence ID" value="AAP35686.1"/>
    <property type="molecule type" value="mRNA"/>
</dbReference>
<dbReference type="EMBL" id="CR533513">
    <property type="protein sequence ID" value="CAG38544.1"/>
    <property type="molecule type" value="mRNA"/>
</dbReference>
<dbReference type="EMBL" id="AC005534">
    <property type="protein sequence ID" value="AAD43189.1"/>
    <property type="molecule type" value="Genomic_DNA"/>
</dbReference>
<dbReference type="EMBL" id="BC015416">
    <property type="protein sequence ID" value="AAH15416.1"/>
    <property type="molecule type" value="mRNA"/>
</dbReference>
<dbReference type="CCDS" id="CCDS5944.1">
    <molecule id="Q9H0A6-1"/>
</dbReference>
<dbReference type="CCDS" id="CCDS78292.1">
    <molecule id="Q9H0A6-4"/>
</dbReference>
<dbReference type="RefSeq" id="NP_001171925.1">
    <molecule id="Q9H0A6-1"/>
    <property type="nucleotide sequence ID" value="NM_001184996.2"/>
</dbReference>
<dbReference type="RefSeq" id="NP_001171926.1">
    <molecule id="Q9H0A6-1"/>
    <property type="nucleotide sequence ID" value="NM_001184997.1"/>
</dbReference>
<dbReference type="RefSeq" id="NP_001295202.1">
    <property type="nucleotide sequence ID" value="NM_001308273.1"/>
</dbReference>
<dbReference type="RefSeq" id="NP_001295203.1">
    <molecule id="Q9H0A6-4"/>
    <property type="nucleotide sequence ID" value="NM_001308274.1"/>
</dbReference>
<dbReference type="RefSeq" id="NP_112198.1">
    <molecule id="Q9H0A6-1"/>
    <property type="nucleotide sequence ID" value="NM_030936.4"/>
</dbReference>
<dbReference type="RefSeq" id="XP_005249579.1">
    <molecule id="Q9H0A6-1"/>
    <property type="nucleotide sequence ID" value="XM_005249522.6"/>
</dbReference>
<dbReference type="RefSeq" id="XP_011514106.1">
    <molecule id="Q9H0A6-1"/>
    <property type="nucleotide sequence ID" value="XM_011515804.4"/>
</dbReference>
<dbReference type="RefSeq" id="XP_011514107.1">
    <molecule id="Q9H0A6-1"/>
    <property type="nucleotide sequence ID" value="XM_011515805.4"/>
</dbReference>
<dbReference type="RefSeq" id="XP_011514108.1">
    <molecule id="Q9H0A6-1"/>
    <property type="nucleotide sequence ID" value="XM_011515806.4"/>
</dbReference>
<dbReference type="RefSeq" id="XP_011514109.1">
    <molecule id="Q9H0A6-1"/>
    <property type="nucleotide sequence ID" value="XM_011515807.4"/>
</dbReference>
<dbReference type="RefSeq" id="XP_011514110.1">
    <molecule id="Q9H0A6-1"/>
    <property type="nucleotide sequence ID" value="XM_011515808.4"/>
</dbReference>
<dbReference type="RefSeq" id="XP_011514111.1">
    <molecule id="Q9H0A6-1"/>
    <property type="nucleotide sequence ID" value="XM_011515809.4"/>
</dbReference>
<dbReference type="RefSeq" id="XP_011514112.1">
    <molecule id="Q9H0A6-1"/>
    <property type="nucleotide sequence ID" value="XM_011515810.3"/>
</dbReference>
<dbReference type="RefSeq" id="XP_011514113.1">
    <molecule id="Q9H0A6-1"/>
    <property type="nucleotide sequence ID" value="XM_011515811.3"/>
</dbReference>
<dbReference type="RefSeq" id="XP_011514114.1">
    <molecule id="Q9H0A6-1"/>
    <property type="nucleotide sequence ID" value="XM_011515812.4"/>
</dbReference>
<dbReference type="RefSeq" id="XP_016867244.1">
    <molecule id="Q9H0A6-4"/>
    <property type="nucleotide sequence ID" value="XM_017011755.2"/>
</dbReference>
<dbReference type="RefSeq" id="XP_024302434.1">
    <molecule id="Q9H0A6-4"/>
    <property type="nucleotide sequence ID" value="XM_024446666.2"/>
</dbReference>
<dbReference type="RefSeq" id="XP_047275850.1">
    <molecule id="Q9H0A6-1"/>
    <property type="nucleotide sequence ID" value="XM_047419894.1"/>
</dbReference>
<dbReference type="RefSeq" id="XP_047275851.1">
    <molecule id="Q9H0A6-1"/>
    <property type="nucleotide sequence ID" value="XM_047419895.1"/>
</dbReference>
<dbReference type="RefSeq" id="XP_047275852.1">
    <molecule id="Q9H0A6-1"/>
    <property type="nucleotide sequence ID" value="XM_047419896.1"/>
</dbReference>
<dbReference type="RefSeq" id="XP_047275853.1">
    <molecule id="Q9H0A6-1"/>
    <property type="nucleotide sequence ID" value="XM_047419897.1"/>
</dbReference>
<dbReference type="RefSeq" id="XP_047275856.1">
    <molecule id="Q9H0A6-4"/>
    <property type="nucleotide sequence ID" value="XM_047419900.1"/>
</dbReference>
<dbReference type="RefSeq" id="XP_047275857.1">
    <molecule id="Q9H0A6-4"/>
    <property type="nucleotide sequence ID" value="XM_047419901.1"/>
</dbReference>
<dbReference type="RefSeq" id="XP_047275858.1">
    <molecule id="Q9H0A6-4"/>
    <property type="nucleotide sequence ID" value="XM_047419902.1"/>
</dbReference>
<dbReference type="RefSeq" id="XP_047275859.1">
    <molecule id="Q9H0A6-4"/>
    <property type="nucleotide sequence ID" value="XM_047419903.1"/>
</dbReference>
<dbReference type="RefSeq" id="XP_047275860.1">
    <molecule id="Q9H0A6-4"/>
    <property type="nucleotide sequence ID" value="XM_047419904.1"/>
</dbReference>
<dbReference type="RefSeq" id="XP_054213243.1">
    <molecule id="Q9H0A6-1"/>
    <property type="nucleotide sequence ID" value="XM_054357268.1"/>
</dbReference>
<dbReference type="RefSeq" id="XP_054213244.1">
    <molecule id="Q9H0A6-1"/>
    <property type="nucleotide sequence ID" value="XM_054357269.1"/>
</dbReference>
<dbReference type="RefSeq" id="XP_054213245.1">
    <molecule id="Q9H0A6-1"/>
    <property type="nucleotide sequence ID" value="XM_054357270.1"/>
</dbReference>
<dbReference type="RefSeq" id="XP_054213246.1">
    <molecule id="Q9H0A6-1"/>
    <property type="nucleotide sequence ID" value="XM_054357271.1"/>
</dbReference>
<dbReference type="RefSeq" id="XP_054213247.1">
    <molecule id="Q9H0A6-1"/>
    <property type="nucleotide sequence ID" value="XM_054357272.1"/>
</dbReference>
<dbReference type="RefSeq" id="XP_054213248.1">
    <molecule id="Q9H0A6-1"/>
    <property type="nucleotide sequence ID" value="XM_054357273.1"/>
</dbReference>
<dbReference type="RefSeq" id="XP_054213249.1">
    <molecule id="Q9H0A6-1"/>
    <property type="nucleotide sequence ID" value="XM_054357274.1"/>
</dbReference>
<dbReference type="RefSeq" id="XP_054213250.1">
    <molecule id="Q9H0A6-1"/>
    <property type="nucleotide sequence ID" value="XM_054357275.1"/>
</dbReference>
<dbReference type="RefSeq" id="XP_054213251.1">
    <molecule id="Q9H0A6-1"/>
    <property type="nucleotide sequence ID" value="XM_054357276.1"/>
</dbReference>
<dbReference type="RefSeq" id="XP_054213252.1">
    <molecule id="Q9H0A6-1"/>
    <property type="nucleotide sequence ID" value="XM_054357277.1"/>
</dbReference>
<dbReference type="RefSeq" id="XP_054213253.1">
    <molecule id="Q9H0A6-1"/>
    <property type="nucleotide sequence ID" value="XM_054357278.1"/>
</dbReference>
<dbReference type="RefSeq" id="XP_054213254.1">
    <molecule id="Q9H0A6-1"/>
    <property type="nucleotide sequence ID" value="XM_054357279.1"/>
</dbReference>
<dbReference type="RefSeq" id="XP_054213258.1">
    <molecule id="Q9H0A6-4"/>
    <property type="nucleotide sequence ID" value="XM_054357283.1"/>
</dbReference>
<dbReference type="RefSeq" id="XP_054213259.1">
    <molecule id="Q9H0A6-4"/>
    <property type="nucleotide sequence ID" value="XM_054357284.1"/>
</dbReference>
<dbReference type="RefSeq" id="XP_054213260.1">
    <molecule id="Q9H0A6-4"/>
    <property type="nucleotide sequence ID" value="XM_054357285.1"/>
</dbReference>
<dbReference type="RefSeq" id="XP_054213261.1">
    <molecule id="Q9H0A6-4"/>
    <property type="nucleotide sequence ID" value="XM_054357286.1"/>
</dbReference>
<dbReference type="RefSeq" id="XP_054213262.1">
    <molecule id="Q9H0A6-4"/>
    <property type="nucleotide sequence ID" value="XM_054357287.1"/>
</dbReference>
<dbReference type="RefSeq" id="XP_054213263.1">
    <molecule id="Q9H0A6-4"/>
    <property type="nucleotide sequence ID" value="XM_054357288.1"/>
</dbReference>
<dbReference type="RefSeq" id="XP_054213264.1">
    <molecule id="Q9H0A6-4"/>
    <property type="nucleotide sequence ID" value="XM_054357289.1"/>
</dbReference>
<dbReference type="SMR" id="Q9H0A6"/>
<dbReference type="BioGRID" id="126622">
    <property type="interactions" value="46"/>
</dbReference>
<dbReference type="FunCoup" id="Q9H0A6">
    <property type="interactions" value="532"/>
</dbReference>
<dbReference type="IntAct" id="Q9H0A6">
    <property type="interactions" value="34"/>
</dbReference>
<dbReference type="STRING" id="9606.ENSP00000385285"/>
<dbReference type="MoonDB" id="Q9H0A6">
    <property type="type" value="Predicted"/>
</dbReference>
<dbReference type="GlyGen" id="Q9H0A6">
    <property type="glycosylation" value="1 site"/>
</dbReference>
<dbReference type="PhosphoSitePlus" id="Q9H0A6"/>
<dbReference type="BioMuta" id="RNF32"/>
<dbReference type="DMDM" id="74717970"/>
<dbReference type="jPOST" id="Q9H0A6"/>
<dbReference type="MassIVE" id="Q9H0A6"/>
<dbReference type="PaxDb" id="9606-ENSP00000385285"/>
<dbReference type="PeptideAtlas" id="Q9H0A6"/>
<dbReference type="Antibodypedia" id="18881">
    <property type="antibodies" value="79 antibodies from 20 providers"/>
</dbReference>
<dbReference type="DNASU" id="140545"/>
<dbReference type="Ensembl" id="ENST00000317955.10">
    <molecule id="Q9H0A6-1"/>
    <property type="protein sequence ID" value="ENSP00000315950.5"/>
    <property type="gene ID" value="ENSG00000105982.17"/>
</dbReference>
<dbReference type="Ensembl" id="ENST00000392741.6">
    <molecule id="Q9H0A6-4"/>
    <property type="protein sequence ID" value="ENSP00000376497.2"/>
    <property type="gene ID" value="ENSG00000105982.17"/>
</dbReference>
<dbReference type="Ensembl" id="ENST00000392743.6">
    <molecule id="Q9H0A6-1"/>
    <property type="protein sequence ID" value="ENSP00000376499.2"/>
    <property type="gene ID" value="ENSG00000105982.17"/>
</dbReference>
<dbReference type="Ensembl" id="ENST00000392747.6">
    <molecule id="Q9H0A6-6"/>
    <property type="protein sequence ID" value="ENSP00000376503.2"/>
    <property type="gene ID" value="ENSG00000105982.17"/>
</dbReference>
<dbReference type="Ensembl" id="ENST00000405335.5">
    <molecule id="Q9H0A6-1"/>
    <property type="protein sequence ID" value="ENSP00000385285.1"/>
    <property type="gene ID" value="ENSG00000105982.17"/>
</dbReference>
<dbReference type="Ensembl" id="ENST00000432459.6">
    <molecule id="Q9H0A6-1"/>
    <property type="protein sequence ID" value="ENSP00000405588.2"/>
    <property type="gene ID" value="ENSG00000105982.17"/>
</dbReference>
<dbReference type="GeneID" id="140545"/>
<dbReference type="KEGG" id="hsa:140545"/>
<dbReference type="MANE-Select" id="ENST00000317955.10">
    <property type="protein sequence ID" value="ENSP00000315950.5"/>
    <property type="RefSeq nucleotide sequence ID" value="NM_030936.4"/>
    <property type="RefSeq protein sequence ID" value="NP_112198.1"/>
</dbReference>
<dbReference type="UCSC" id="uc003wmo.4">
    <molecule id="Q9H0A6-1"/>
    <property type="organism name" value="human"/>
</dbReference>
<dbReference type="AGR" id="HGNC:17118"/>
<dbReference type="CTD" id="140545"/>
<dbReference type="GeneCards" id="RNF32"/>
<dbReference type="HGNC" id="HGNC:17118">
    <property type="gene designation" value="RNF32"/>
</dbReference>
<dbReference type="HPA" id="ENSG00000105982">
    <property type="expression patterns" value="Tissue enriched (testis)"/>
</dbReference>
<dbReference type="MIM" id="610241">
    <property type="type" value="gene"/>
</dbReference>
<dbReference type="neXtProt" id="NX_Q9H0A6"/>
<dbReference type="OpenTargets" id="ENSG00000105982"/>
<dbReference type="PharmGKB" id="PA34435"/>
<dbReference type="VEuPathDB" id="HostDB:ENSG00000105982"/>
<dbReference type="eggNOG" id="KOG0800">
    <property type="taxonomic scope" value="Eukaryota"/>
</dbReference>
<dbReference type="GeneTree" id="ENSGT00390000003759"/>
<dbReference type="HOGENOM" id="CLU_064517_0_0_1"/>
<dbReference type="InParanoid" id="Q9H0A6"/>
<dbReference type="OMA" id="PQENDWD"/>
<dbReference type="OrthoDB" id="8062037at2759"/>
<dbReference type="PAN-GO" id="Q9H0A6">
    <property type="GO annotations" value="0 GO annotations based on evolutionary models"/>
</dbReference>
<dbReference type="PhylomeDB" id="Q9H0A6"/>
<dbReference type="TreeFam" id="TF329796"/>
<dbReference type="PathwayCommons" id="Q9H0A6"/>
<dbReference type="SignaLink" id="Q9H0A6"/>
<dbReference type="SIGNOR" id="Q9H0A6"/>
<dbReference type="BioGRID-ORCS" id="140545">
    <property type="hits" value="13 hits in 1194 CRISPR screens"/>
</dbReference>
<dbReference type="ChiTaRS" id="RNF32">
    <property type="organism name" value="human"/>
</dbReference>
<dbReference type="GeneWiki" id="RNF32"/>
<dbReference type="GenomeRNAi" id="140545"/>
<dbReference type="Pharos" id="Q9H0A6">
    <property type="development level" value="Tbio"/>
</dbReference>
<dbReference type="PRO" id="PR:Q9H0A6"/>
<dbReference type="Proteomes" id="UP000005640">
    <property type="component" value="Chromosome 7"/>
</dbReference>
<dbReference type="RNAct" id="Q9H0A6">
    <property type="molecule type" value="protein"/>
</dbReference>
<dbReference type="Bgee" id="ENSG00000105982">
    <property type="expression patterns" value="Expressed in left testis and 110 other cell types or tissues"/>
</dbReference>
<dbReference type="ExpressionAtlas" id="Q9H0A6">
    <property type="expression patterns" value="baseline and differential"/>
</dbReference>
<dbReference type="GO" id="GO:0016235">
    <property type="term" value="C:aggresome"/>
    <property type="evidence" value="ECO:0000314"/>
    <property type="project" value="MGI"/>
</dbReference>
<dbReference type="GO" id="GO:0005829">
    <property type="term" value="C:cytosol"/>
    <property type="evidence" value="ECO:0000314"/>
    <property type="project" value="HPA"/>
</dbReference>
<dbReference type="GO" id="GO:0005768">
    <property type="term" value="C:endosome"/>
    <property type="evidence" value="ECO:0000314"/>
    <property type="project" value="LIFEdb"/>
</dbReference>
<dbReference type="GO" id="GO:0016604">
    <property type="term" value="C:nuclear body"/>
    <property type="evidence" value="ECO:0000314"/>
    <property type="project" value="HPA"/>
</dbReference>
<dbReference type="GO" id="GO:0008270">
    <property type="term" value="F:zinc ion binding"/>
    <property type="evidence" value="ECO:0007669"/>
    <property type="project" value="UniProtKB-KW"/>
</dbReference>
<dbReference type="CDD" id="cd23767">
    <property type="entry name" value="IQCD"/>
    <property type="match status" value="1"/>
</dbReference>
<dbReference type="CDD" id="cd16677">
    <property type="entry name" value="RING-H2_RNF32_rpt1"/>
    <property type="match status" value="1"/>
</dbReference>
<dbReference type="CDD" id="cd16678">
    <property type="entry name" value="RING-H2_RNF32_rpt2"/>
    <property type="match status" value="1"/>
</dbReference>
<dbReference type="FunFam" id="3.30.40.10:FF:001048">
    <property type="entry name" value="Ring finger protein 32"/>
    <property type="match status" value="1"/>
</dbReference>
<dbReference type="FunFam" id="3.30.40.10:FF:000208">
    <property type="entry name" value="Zinc finger protein-related isoform 1"/>
    <property type="match status" value="1"/>
</dbReference>
<dbReference type="Gene3D" id="1.20.5.190">
    <property type="match status" value="1"/>
</dbReference>
<dbReference type="Gene3D" id="3.30.40.10">
    <property type="entry name" value="Zinc/RING finger domain, C3HC4 (zinc finger)"/>
    <property type="match status" value="2"/>
</dbReference>
<dbReference type="InterPro" id="IPR000048">
    <property type="entry name" value="IQ_motif_EF-hand-BS"/>
</dbReference>
<dbReference type="InterPro" id="IPR042862">
    <property type="entry name" value="RNF32"/>
</dbReference>
<dbReference type="InterPro" id="IPR027370">
    <property type="entry name" value="Znf-RING_euk"/>
</dbReference>
<dbReference type="InterPro" id="IPR001841">
    <property type="entry name" value="Znf_RING"/>
</dbReference>
<dbReference type="InterPro" id="IPR013083">
    <property type="entry name" value="Znf_RING/FYVE/PHD"/>
</dbReference>
<dbReference type="PANTHER" id="PTHR14991">
    <property type="entry name" value="RING FINGER PROTEIN 32"/>
    <property type="match status" value="1"/>
</dbReference>
<dbReference type="PANTHER" id="PTHR14991:SF0">
    <property type="entry name" value="RING FINGER PROTEIN 32"/>
    <property type="match status" value="1"/>
</dbReference>
<dbReference type="Pfam" id="PF00612">
    <property type="entry name" value="IQ"/>
    <property type="match status" value="1"/>
</dbReference>
<dbReference type="Pfam" id="PF13639">
    <property type="entry name" value="zf-RING_2"/>
    <property type="match status" value="1"/>
</dbReference>
<dbReference type="Pfam" id="PF13445">
    <property type="entry name" value="zf-RING_UBOX"/>
    <property type="match status" value="1"/>
</dbReference>
<dbReference type="SMART" id="SM00184">
    <property type="entry name" value="RING"/>
    <property type="match status" value="2"/>
</dbReference>
<dbReference type="SUPFAM" id="SSF57850">
    <property type="entry name" value="RING/U-box"/>
    <property type="match status" value="2"/>
</dbReference>
<dbReference type="PROSITE" id="PS50096">
    <property type="entry name" value="IQ"/>
    <property type="match status" value="1"/>
</dbReference>
<dbReference type="PROSITE" id="PS50089">
    <property type="entry name" value="ZF_RING_2"/>
    <property type="match status" value="2"/>
</dbReference>
<gene>
    <name type="primary">RNF32</name>
    <name type="ORF">FKSG33</name>
    <name type="ORF">HSD15</name>
</gene>
<reference key="1">
    <citation type="journal article" date="2002" name="Biochem. Biophys. Res. Commun.">
        <title>A double RING-H2 domain in RNF32, a gene expressed during sperm formation.</title>
        <authorList>
            <person name="van Baren M.J."/>
            <person name="van der Linde H.C."/>
            <person name="Breedveld G.J."/>
            <person name="Baarends W.M."/>
            <person name="Rizzu P."/>
            <person name="de Graaff E."/>
            <person name="Oostra B.A."/>
            <person name="Heutink P."/>
        </authorList>
    </citation>
    <scope>NUCLEOTIDE SEQUENCE [MRNA] (ISOFORMS 1 AND 5)</scope>
    <scope>FUNCTION</scope>
    <scope>SUBCELLULAR LOCATION</scope>
    <scope>TISSUE SPECIFICITY</scope>
    <scope>ALTERNATIVE SPLICING</scope>
</reference>
<reference key="2">
    <citation type="submission" date="2000-12" db="EMBL/GenBank/DDBJ databases">
        <title>Characterization of FKSG33, a novel gene located on human chromosome 7q35-36.</title>
        <authorList>
            <person name="Wang Y.-G."/>
            <person name="Gong L."/>
        </authorList>
    </citation>
    <scope>NUCLEOTIDE SEQUENCE [MRNA] (ISOFORM 1)</scope>
</reference>
<reference key="3">
    <citation type="journal article" date="2001" name="Genome Res.">
        <title>Towards a catalog of human genes and proteins: sequencing and analysis of 500 novel complete protein coding human cDNAs.</title>
        <authorList>
            <person name="Wiemann S."/>
            <person name="Weil B."/>
            <person name="Wellenreuther R."/>
            <person name="Gassenhuber J."/>
            <person name="Glassl S."/>
            <person name="Ansorge W."/>
            <person name="Boecher M."/>
            <person name="Bloecker H."/>
            <person name="Bauersachs S."/>
            <person name="Blum H."/>
            <person name="Lauber J."/>
            <person name="Duesterhoeft A."/>
            <person name="Beyer A."/>
            <person name="Koehrer K."/>
            <person name="Strack N."/>
            <person name="Mewes H.-W."/>
            <person name="Ottenwaelder B."/>
            <person name="Obermaier B."/>
            <person name="Tampe J."/>
            <person name="Heubner D."/>
            <person name="Wambutt R."/>
            <person name="Korn B."/>
            <person name="Klein M."/>
            <person name="Poustka A."/>
        </authorList>
    </citation>
    <scope>NUCLEOTIDE SEQUENCE [LARGE SCALE MRNA] (ISOFORM 1)</scope>
    <source>
        <tissue>Testis</tissue>
    </source>
</reference>
<reference key="4">
    <citation type="submission" date="2003-03" db="EMBL/GenBank/DDBJ databases">
        <title>A new spermatogenesis-related gene.</title>
        <authorList>
            <person name="Hu T.H."/>
            <person name="Miao S.Y."/>
            <person name="Zhang X.D."/>
            <person name="Qiao Y."/>
            <person name="Liang G."/>
            <person name="Wang L.F."/>
        </authorList>
    </citation>
    <scope>NUCLEOTIDE SEQUENCE [LARGE SCALE MRNA] (ISOFORM 4)</scope>
    <source>
        <tissue>Testis</tissue>
    </source>
</reference>
<reference key="5">
    <citation type="submission" date="2003-05" db="EMBL/GenBank/DDBJ databases">
        <title>Cloning of human full-length CDSs in BD Creator(TM) system donor vector.</title>
        <authorList>
            <person name="Kalnine N."/>
            <person name="Chen X."/>
            <person name="Rolfs A."/>
            <person name="Halleck A."/>
            <person name="Hines L."/>
            <person name="Eisenstein S."/>
            <person name="Koundinya M."/>
            <person name="Raphael J."/>
            <person name="Moreira D."/>
            <person name="Kelley T."/>
            <person name="LaBaer J."/>
            <person name="Lin Y."/>
            <person name="Phelan M."/>
            <person name="Farmer A."/>
        </authorList>
    </citation>
    <scope>NUCLEOTIDE SEQUENCE [LARGE SCALE MRNA] (ISOFORM 3)</scope>
</reference>
<reference key="6">
    <citation type="submission" date="2004-06" db="EMBL/GenBank/DDBJ databases">
        <title>Cloning of human full open reading frames in Gateway(TM) system entry vector (pDONR201).</title>
        <authorList>
            <person name="Ebert L."/>
            <person name="Schick M."/>
            <person name="Neubert P."/>
            <person name="Schatten R."/>
            <person name="Henze S."/>
            <person name="Korn B."/>
        </authorList>
    </citation>
    <scope>NUCLEOTIDE SEQUENCE [LARGE SCALE MRNA] (ISOFORM 1)</scope>
</reference>
<reference key="7">
    <citation type="journal article" date="2003" name="Nature">
        <title>The DNA sequence of human chromosome 7.</title>
        <authorList>
            <person name="Hillier L.W."/>
            <person name="Fulton R.S."/>
            <person name="Fulton L.A."/>
            <person name="Graves T.A."/>
            <person name="Pepin K.H."/>
            <person name="Wagner-McPherson C."/>
            <person name="Layman D."/>
            <person name="Maas J."/>
            <person name="Jaeger S."/>
            <person name="Walker R."/>
            <person name="Wylie K."/>
            <person name="Sekhon M."/>
            <person name="Becker M.C."/>
            <person name="O'Laughlin M.D."/>
            <person name="Schaller M.E."/>
            <person name="Fewell G.A."/>
            <person name="Delehaunty K.D."/>
            <person name="Miner T.L."/>
            <person name="Nash W.E."/>
            <person name="Cordes M."/>
            <person name="Du H."/>
            <person name="Sun H."/>
            <person name="Edwards J."/>
            <person name="Bradshaw-Cordum H."/>
            <person name="Ali J."/>
            <person name="Andrews S."/>
            <person name="Isak A."/>
            <person name="Vanbrunt A."/>
            <person name="Nguyen C."/>
            <person name="Du F."/>
            <person name="Lamar B."/>
            <person name="Courtney L."/>
            <person name="Kalicki J."/>
            <person name="Ozersky P."/>
            <person name="Bielicki L."/>
            <person name="Scott K."/>
            <person name="Holmes A."/>
            <person name="Harkins R."/>
            <person name="Harris A."/>
            <person name="Strong C.M."/>
            <person name="Hou S."/>
            <person name="Tomlinson C."/>
            <person name="Dauphin-Kohlberg S."/>
            <person name="Kozlowicz-Reilly A."/>
            <person name="Leonard S."/>
            <person name="Rohlfing T."/>
            <person name="Rock S.M."/>
            <person name="Tin-Wollam A.-M."/>
            <person name="Abbott A."/>
            <person name="Minx P."/>
            <person name="Maupin R."/>
            <person name="Strowmatt C."/>
            <person name="Latreille P."/>
            <person name="Miller N."/>
            <person name="Johnson D."/>
            <person name="Murray J."/>
            <person name="Woessner J.P."/>
            <person name="Wendl M.C."/>
            <person name="Yang S.-P."/>
            <person name="Schultz B.R."/>
            <person name="Wallis J.W."/>
            <person name="Spieth J."/>
            <person name="Bieri T.A."/>
            <person name="Nelson J.O."/>
            <person name="Berkowicz N."/>
            <person name="Wohldmann P.E."/>
            <person name="Cook L.L."/>
            <person name="Hickenbotham M.T."/>
            <person name="Eldred J."/>
            <person name="Williams D."/>
            <person name="Bedell J.A."/>
            <person name="Mardis E.R."/>
            <person name="Clifton S.W."/>
            <person name="Chissoe S.L."/>
            <person name="Marra M.A."/>
            <person name="Raymond C."/>
            <person name="Haugen E."/>
            <person name="Gillett W."/>
            <person name="Zhou Y."/>
            <person name="James R."/>
            <person name="Phelps K."/>
            <person name="Iadanoto S."/>
            <person name="Bubb K."/>
            <person name="Simms E."/>
            <person name="Levy R."/>
            <person name="Clendenning J."/>
            <person name="Kaul R."/>
            <person name="Kent W.J."/>
            <person name="Furey T.S."/>
            <person name="Baertsch R.A."/>
            <person name="Brent M.R."/>
            <person name="Keibler E."/>
            <person name="Flicek P."/>
            <person name="Bork P."/>
            <person name="Suyama M."/>
            <person name="Bailey J.A."/>
            <person name="Portnoy M.E."/>
            <person name="Torrents D."/>
            <person name="Chinwalla A.T."/>
            <person name="Gish W.R."/>
            <person name="Eddy S.R."/>
            <person name="McPherson J.D."/>
            <person name="Olson M.V."/>
            <person name="Eichler E.E."/>
            <person name="Green E.D."/>
            <person name="Waterston R.H."/>
            <person name="Wilson R.K."/>
        </authorList>
    </citation>
    <scope>NUCLEOTIDE SEQUENCE [LARGE SCALE GENOMIC DNA]</scope>
</reference>
<reference key="8">
    <citation type="journal article" date="2004" name="Genome Res.">
        <title>The status, quality, and expansion of the NIH full-length cDNA project: the Mammalian Gene Collection (MGC).</title>
        <authorList>
            <consortium name="The MGC Project Team"/>
        </authorList>
    </citation>
    <scope>NUCLEOTIDE SEQUENCE [LARGE SCALE MRNA] (ISOFORM 3)</scope>
    <source>
        <tissue>Duodenum</tissue>
    </source>
</reference>
<organism>
    <name type="scientific">Homo sapiens</name>
    <name type="common">Human</name>
    <dbReference type="NCBI Taxonomy" id="9606"/>
    <lineage>
        <taxon>Eukaryota</taxon>
        <taxon>Metazoa</taxon>
        <taxon>Chordata</taxon>
        <taxon>Craniata</taxon>
        <taxon>Vertebrata</taxon>
        <taxon>Euteleostomi</taxon>
        <taxon>Mammalia</taxon>
        <taxon>Eutheria</taxon>
        <taxon>Euarchontoglires</taxon>
        <taxon>Primates</taxon>
        <taxon>Haplorrhini</taxon>
        <taxon>Catarrhini</taxon>
        <taxon>Hominidae</taxon>
        <taxon>Homo</taxon>
    </lineage>
</organism>
<name>RNF32_HUMAN</name>
<proteinExistence type="evidence at protein level"/>
<accession>Q9H0A6</accession>
<accession>Q6FIB3</accession>
<accession>Q6X7T4</accession>
<accession>Q8N6V8</accession>
<accession>Q8TDG0</accession>
<accession>Q96BM5</accession>
<accession>Q9Y6U1</accession>
<sequence>MLKNKGHSSKKDNLAVNAVALQDHILHDLQLRNLSVADHSKTQVQKKENKSLKRDTKAIIDTGLKKTTQCPKLEDSEKEYVLDPKPPPLTLAQKLGLIGPPPPPLSSDEWEKVKQRSLLQGDSVQPCPICKEEFELRPQVLLSCSHVFHKACLQAFEKFTNKKTCPLCRKNQYQTRVIHDGARLFRIKCVTRIQAYWRGCVVRKWYRNLRKTVPPTDAKLRKKFFEKKFTEISHRILCSYNTNIEELFAEIDQCLAINRSVLQQLEEKCGHEITEEEWEKIQVQALRRETHECSICLAPLSAAGGQRVGAGRRSREMALLSCSHVFHHACLLALEEFSVGDRPPFHACPLCRSCYQKKILEC</sequence>
<keyword id="KW-0025">Alternative splicing</keyword>
<keyword id="KW-0963">Cytoplasm</keyword>
<keyword id="KW-0479">Metal-binding</keyword>
<keyword id="KW-1185">Reference proteome</keyword>
<keyword id="KW-0677">Repeat</keyword>
<keyword id="KW-0862">Zinc</keyword>
<keyword id="KW-0863">Zinc-finger</keyword>